<protein>
    <recommendedName>
        <fullName>Exocyst complex component 8</fullName>
    </recommendedName>
    <alternativeName>
        <fullName>Exocyst complex 84 kDa subunit</fullName>
    </alternativeName>
</protein>
<sequence length="716" mass="81035">MSDSGASRLRRQLESGGFEARLYVKQLSQQSDGDRDLQEHRQRVQALAEETAQNLKRNVYQNYRQFIETAREISYLESEMYQLSHLLTEQKSSLESIPLALLPAAAAGASAGEDTAGAGPRERGAVQAGFLPGPAGVPREGSGTGEEGKQRTLTTLLEKVEGCRDLLETPGQYLVYNGDLVEYDADHMAQLQRVHGFLMNDCLLVATWLPQRRGMYRYNALYPLDRLAVVNVKDNPPMKDMFKLLMFPESRIFQAENAKIKREWLEVLEETKRALSDKRRREQEEAAAPRAPPPVTSKGSNPFEDEDDEELATPEAEEEKVDLSMEWIQELPEDLDVCIAQRDFEGAVDLLDKLNHYLEDKPSPPPVKELRAKVDERVRQLTEVLVFELSPDRSLRGGPKATRRAVSQLIRLGQCTKACELFLRNRAAAVHTAIRQLRIEGATLLYIHKLCHVFFTSLLETAREFETDFAGTDSGCYSAFVVWARSAMGMFVDAFSKQVFDSKESLSTAAECVKVAKEHCQQLGEIGLDLTFIIHALLVKDIQGALHSYKEIIIEATKHRNSEEMWRRMNLMTPEALGKLKEEMKSCGVSNFEQYTGDDCWVNLSYTVVAFTKQTMGFLEEALKLYFPELHMVLLESLVEIILVAVQHVDYSLRCEQDPEKKAFIRQNASFLYETVLPVVERRFEEGVGKPAKQLQDLRNASRLLRVNPESTTSVV</sequence>
<feature type="chain" id="PRO_0000227551" description="Exocyst complex component 8">
    <location>
        <begin position="1"/>
        <end position="716"/>
    </location>
</feature>
<feature type="domain" description="PH" evidence="4">
    <location>
        <begin position="173"/>
        <end position="273"/>
    </location>
</feature>
<feature type="region of interest" description="Disordered" evidence="5">
    <location>
        <begin position="129"/>
        <end position="150"/>
    </location>
</feature>
<feature type="region of interest" description="Disordered" evidence="5">
    <location>
        <begin position="275"/>
        <end position="319"/>
    </location>
</feature>
<feature type="compositionally biased region" description="Basic and acidic residues" evidence="5">
    <location>
        <begin position="275"/>
        <end position="284"/>
    </location>
</feature>
<feature type="compositionally biased region" description="Acidic residues" evidence="5">
    <location>
        <begin position="303"/>
        <end position="319"/>
    </location>
</feature>
<feature type="modified residue" description="Phosphoserine" evidence="3">
    <location>
        <position position="15"/>
    </location>
</feature>
<feature type="modified residue" description="Phosphothreonine" evidence="7">
    <location>
        <position position="313"/>
    </location>
</feature>
<accession>Q6PGF7</accession>
<reference key="1">
    <citation type="journal article" date="2004" name="Genome Res.">
        <title>The status, quality, and expansion of the NIH full-length cDNA project: the Mammalian Gene Collection (MGC).</title>
        <authorList>
            <consortium name="The MGC Project Team"/>
        </authorList>
    </citation>
    <scope>NUCLEOTIDE SEQUENCE [LARGE SCALE MRNA]</scope>
    <source>
        <strain>C57BL/6J</strain>
        <tissue>Brain</tissue>
    </source>
</reference>
<reference key="2">
    <citation type="journal article" date="2004" name="Mol. Cell. Proteomics">
        <title>Phosphoproteomic analysis of the developing mouse brain.</title>
        <authorList>
            <person name="Ballif B.A."/>
            <person name="Villen J."/>
            <person name="Beausoleil S.A."/>
            <person name="Schwartz D."/>
            <person name="Gygi S.P."/>
        </authorList>
    </citation>
    <scope>PHOSPHORYLATION [LARGE SCALE ANALYSIS] AT THR-313</scope>
    <scope>IDENTIFICATION BY MASS SPECTROMETRY [LARGE SCALE ANALYSIS]</scope>
    <source>
        <tissue>Embryonic brain</tissue>
    </source>
</reference>
<reference key="3">
    <citation type="journal article" date="2010" name="Cell">
        <title>A tissue-specific atlas of mouse protein phosphorylation and expression.</title>
        <authorList>
            <person name="Huttlin E.L."/>
            <person name="Jedrychowski M.P."/>
            <person name="Elias J.E."/>
            <person name="Goswami T."/>
            <person name="Rad R."/>
            <person name="Beausoleil S.A."/>
            <person name="Villen J."/>
            <person name="Haas W."/>
            <person name="Sowa M.E."/>
            <person name="Gygi S.P."/>
        </authorList>
    </citation>
    <scope>IDENTIFICATION BY MASS SPECTROMETRY [LARGE SCALE ANALYSIS]</scope>
    <source>
        <tissue>Brain</tissue>
        <tissue>Brown adipose tissue</tissue>
        <tissue>Heart</tissue>
        <tissue>Kidney</tissue>
        <tissue>Liver</tissue>
        <tissue>Lung</tissue>
        <tissue>Pancreas</tissue>
        <tissue>Spleen</tissue>
        <tissue>Testis</tissue>
    </source>
</reference>
<gene>
    <name type="primary">Exoc8</name>
</gene>
<comment type="function">
    <text evidence="1">Component of the exocyst complex involved in the docking of exocytic vesicles with fusion sites on the plasma membrane.</text>
</comment>
<comment type="subunit">
    <text evidence="2 3">The exocyst complex is composed of EXOC1, EXOC2, EXOC3, EXOC4, EXOC5, EXOC6, EXOC7 and EXOC8 (By similarity). Interacts (via PH domain) with GTP-bound RALA and RALB (By similarity). Interacts with SH3BP1; required for the localization of both SH3BP1 and the exocyst to the leading edge of migrating cells (By similarity).</text>
</comment>
<comment type="subcellular location">
    <subcellularLocation>
        <location evidence="2">Cytoplasm</location>
    </subcellularLocation>
    <subcellularLocation>
        <location evidence="2">Cytoplasm</location>
        <location evidence="2">Perinuclear region</location>
    </subcellularLocation>
    <subcellularLocation>
        <location evidence="2">Cell projection</location>
        <location evidence="2">Growth cone</location>
    </subcellularLocation>
    <subcellularLocation>
        <location evidence="2">Cell projection</location>
    </subcellularLocation>
    <text evidence="1 2">Binds lipids with phosphatidylinositol 3,4,5-trisphosphate groups (By similarity). Perinuclear in undifferentiated PC12 cells. Redistributes to growing neurites and growth cones during NGF-induced neuronal differentiation (By similarity). Localizes at the leading edge of migrating cells (By similarity).</text>
</comment>
<comment type="similarity">
    <text evidence="6">Belongs to the EXO84 family.</text>
</comment>
<dbReference type="EMBL" id="BC057052">
    <property type="protein sequence ID" value="AAH57052.1"/>
    <property type="molecule type" value="mRNA"/>
</dbReference>
<dbReference type="CCDS" id="CCDS22777.1"/>
<dbReference type="RefSeq" id="NP_932771.1">
    <property type="nucleotide sequence ID" value="NM_198103.2"/>
</dbReference>
<dbReference type="BioGRID" id="221786">
    <property type="interactions" value="11"/>
</dbReference>
<dbReference type="ComplexPortal" id="CPX-4982">
    <property type="entry name" value="Exocyst, Exoc6 variant"/>
</dbReference>
<dbReference type="ComplexPortal" id="CPX-4983">
    <property type="entry name" value="Exocyst, Exoc6b variant"/>
</dbReference>
<dbReference type="FunCoup" id="Q6PGF7">
    <property type="interactions" value="3163"/>
</dbReference>
<dbReference type="IntAct" id="Q6PGF7">
    <property type="interactions" value="2"/>
</dbReference>
<dbReference type="STRING" id="10090.ENSMUSP00000095915"/>
<dbReference type="iPTMnet" id="Q6PGF7"/>
<dbReference type="PhosphoSitePlus" id="Q6PGF7"/>
<dbReference type="SwissPalm" id="Q6PGF7"/>
<dbReference type="PaxDb" id="10090-ENSMUSP00000095915"/>
<dbReference type="PeptideAtlas" id="Q6PGF7"/>
<dbReference type="ProteomicsDB" id="275557"/>
<dbReference type="Pumba" id="Q6PGF7"/>
<dbReference type="Antibodypedia" id="20797">
    <property type="antibodies" value="89 antibodies from 17 providers"/>
</dbReference>
<dbReference type="DNASU" id="102058"/>
<dbReference type="Ensembl" id="ENSMUST00000098312.4">
    <property type="protein sequence ID" value="ENSMUSP00000095915.3"/>
    <property type="gene ID" value="ENSMUSG00000074030.4"/>
</dbReference>
<dbReference type="GeneID" id="102058"/>
<dbReference type="KEGG" id="mmu:102058"/>
<dbReference type="UCSC" id="uc009nxw.1">
    <property type="organism name" value="mouse"/>
</dbReference>
<dbReference type="AGR" id="MGI:2142527"/>
<dbReference type="CTD" id="149371"/>
<dbReference type="MGI" id="MGI:2142527">
    <property type="gene designation" value="Exoc8"/>
</dbReference>
<dbReference type="VEuPathDB" id="HostDB:ENSMUSG00000074030"/>
<dbReference type="eggNOG" id="KOG2215">
    <property type="taxonomic scope" value="Eukaryota"/>
</dbReference>
<dbReference type="GeneTree" id="ENSGT00390000015936"/>
<dbReference type="HOGENOM" id="CLU_025760_0_0_1"/>
<dbReference type="InParanoid" id="Q6PGF7"/>
<dbReference type="OMA" id="AAWLPNR"/>
<dbReference type="OrthoDB" id="642193at2759"/>
<dbReference type="PhylomeDB" id="Q6PGF7"/>
<dbReference type="TreeFam" id="TF105819"/>
<dbReference type="Reactome" id="R-MMU-264876">
    <property type="pathway name" value="Insulin processing"/>
</dbReference>
<dbReference type="Reactome" id="R-MMU-5620916">
    <property type="pathway name" value="VxPx cargo-targeting to cilium"/>
</dbReference>
<dbReference type="BioGRID-ORCS" id="102058">
    <property type="hits" value="13 hits in 79 CRISPR screens"/>
</dbReference>
<dbReference type="CD-CODE" id="CE726F99">
    <property type="entry name" value="Postsynaptic density"/>
</dbReference>
<dbReference type="ChiTaRS" id="Exoc8">
    <property type="organism name" value="mouse"/>
</dbReference>
<dbReference type="PRO" id="PR:Q6PGF7"/>
<dbReference type="Proteomes" id="UP000000589">
    <property type="component" value="Chromosome 8"/>
</dbReference>
<dbReference type="RNAct" id="Q6PGF7">
    <property type="molecule type" value="protein"/>
</dbReference>
<dbReference type="Bgee" id="ENSMUSG00000074030">
    <property type="expression patterns" value="Expressed in spermatocyte and 240 other cell types or tissues"/>
</dbReference>
<dbReference type="GO" id="GO:0000145">
    <property type="term" value="C:exocyst"/>
    <property type="evidence" value="ECO:0000303"/>
    <property type="project" value="ComplexPortal"/>
</dbReference>
<dbReference type="GO" id="GO:0030426">
    <property type="term" value="C:growth cone"/>
    <property type="evidence" value="ECO:0007669"/>
    <property type="project" value="UniProtKB-SubCell"/>
</dbReference>
<dbReference type="GO" id="GO:0005770">
    <property type="term" value="C:late endosome"/>
    <property type="evidence" value="ECO:0007669"/>
    <property type="project" value="Ensembl"/>
</dbReference>
<dbReference type="GO" id="GO:0048471">
    <property type="term" value="C:perinuclear region of cytoplasm"/>
    <property type="evidence" value="ECO:0007669"/>
    <property type="project" value="UniProtKB-SubCell"/>
</dbReference>
<dbReference type="GO" id="GO:0005886">
    <property type="term" value="C:plasma membrane"/>
    <property type="evidence" value="ECO:0000304"/>
    <property type="project" value="Reactome"/>
</dbReference>
<dbReference type="GO" id="GO:0035091">
    <property type="term" value="F:phosphatidylinositol binding"/>
    <property type="evidence" value="ECO:0000266"/>
    <property type="project" value="MGI"/>
</dbReference>
<dbReference type="GO" id="GO:0031267">
    <property type="term" value="F:small GTPase binding"/>
    <property type="evidence" value="ECO:0000266"/>
    <property type="project" value="MGI"/>
</dbReference>
<dbReference type="GO" id="GO:0007032">
    <property type="term" value="P:endosome organization"/>
    <property type="evidence" value="ECO:0007669"/>
    <property type="project" value="Ensembl"/>
</dbReference>
<dbReference type="GO" id="GO:0006887">
    <property type="term" value="P:exocytosis"/>
    <property type="evidence" value="ECO:0000266"/>
    <property type="project" value="MGI"/>
</dbReference>
<dbReference type="GO" id="GO:0022617">
    <property type="term" value="P:extracellular matrix disassembly"/>
    <property type="evidence" value="ECO:0007669"/>
    <property type="project" value="Ensembl"/>
</dbReference>
<dbReference type="GO" id="GO:0090148">
    <property type="term" value="P:membrane fission"/>
    <property type="evidence" value="ECO:0000303"/>
    <property type="project" value="ComplexPortal"/>
</dbReference>
<dbReference type="GO" id="GO:0000281">
    <property type="term" value="P:mitotic cytokinesis"/>
    <property type="evidence" value="ECO:0000303"/>
    <property type="project" value="ComplexPortal"/>
</dbReference>
<dbReference type="GO" id="GO:0015031">
    <property type="term" value="P:protein transport"/>
    <property type="evidence" value="ECO:0007669"/>
    <property type="project" value="UniProtKB-KW"/>
</dbReference>
<dbReference type="GO" id="GO:0006904">
    <property type="term" value="P:vesicle docking involved in exocytosis"/>
    <property type="evidence" value="ECO:0000303"/>
    <property type="project" value="ComplexPortal"/>
</dbReference>
<dbReference type="GO" id="GO:0090522">
    <property type="term" value="P:vesicle tethering involved in exocytosis"/>
    <property type="evidence" value="ECO:0000303"/>
    <property type="project" value="ComplexPortal"/>
</dbReference>
<dbReference type="CDD" id="cd01226">
    <property type="entry name" value="PH_RalBD_exo84"/>
    <property type="match status" value="1"/>
</dbReference>
<dbReference type="FunFam" id="1.20.58.1220:FF:000002">
    <property type="entry name" value="Exocyst complex component 8"/>
    <property type="match status" value="1"/>
</dbReference>
<dbReference type="FunFam" id="2.30.29.30:FF:000180">
    <property type="entry name" value="Exocyst complex component 8"/>
    <property type="match status" value="1"/>
</dbReference>
<dbReference type="FunFam" id="1.20.58.1210:FF:000001">
    <property type="entry name" value="exocyst complex component 8"/>
    <property type="match status" value="1"/>
</dbReference>
<dbReference type="Gene3D" id="1.20.58.1220">
    <property type="entry name" value="Exo84p, C-terminal helical domain"/>
    <property type="match status" value="1"/>
</dbReference>
<dbReference type="Gene3D" id="1.20.58.1210">
    <property type="entry name" value="Exo84p, N-terminal helical domain"/>
    <property type="match status" value="1"/>
</dbReference>
<dbReference type="Gene3D" id="2.30.29.30">
    <property type="entry name" value="Pleckstrin-homology domain (PH domain)/Phosphotyrosine-binding domain (PTB)"/>
    <property type="match status" value="1"/>
</dbReference>
<dbReference type="InterPro" id="IPR016159">
    <property type="entry name" value="Cullin_repeat-like_dom_sf"/>
</dbReference>
<dbReference type="InterPro" id="IPR033961">
    <property type="entry name" value="Exo84"/>
</dbReference>
<dbReference type="InterPro" id="IPR032403">
    <property type="entry name" value="Exo84_C"/>
</dbReference>
<dbReference type="InterPro" id="IPR042561">
    <property type="entry name" value="Exo84_C_1"/>
</dbReference>
<dbReference type="InterPro" id="IPR042560">
    <property type="entry name" value="Exo84_C_2"/>
</dbReference>
<dbReference type="InterPro" id="IPR011993">
    <property type="entry name" value="PH-like_dom_sf"/>
</dbReference>
<dbReference type="InterPro" id="IPR001849">
    <property type="entry name" value="PH_domain"/>
</dbReference>
<dbReference type="PANTHER" id="PTHR21426">
    <property type="entry name" value="EXOCYST COMPLEX COMPONENT 8"/>
    <property type="match status" value="1"/>
</dbReference>
<dbReference type="PANTHER" id="PTHR21426:SF12">
    <property type="entry name" value="EXOCYST COMPLEX COMPONENT 8"/>
    <property type="match status" value="1"/>
</dbReference>
<dbReference type="Pfam" id="PF16528">
    <property type="entry name" value="Exo84_C"/>
    <property type="match status" value="1"/>
</dbReference>
<dbReference type="Pfam" id="PF08700">
    <property type="entry name" value="VPS51_Exo84_N"/>
    <property type="match status" value="1"/>
</dbReference>
<dbReference type="SMART" id="SM00233">
    <property type="entry name" value="PH"/>
    <property type="match status" value="1"/>
</dbReference>
<dbReference type="SUPFAM" id="SSF74788">
    <property type="entry name" value="Cullin repeat-like"/>
    <property type="match status" value="1"/>
</dbReference>
<dbReference type="SUPFAM" id="SSF50729">
    <property type="entry name" value="PH domain-like"/>
    <property type="match status" value="1"/>
</dbReference>
<dbReference type="PROSITE" id="PS50003">
    <property type="entry name" value="PH_DOMAIN"/>
    <property type="match status" value="1"/>
</dbReference>
<keyword id="KW-0966">Cell projection</keyword>
<keyword id="KW-0963">Cytoplasm</keyword>
<keyword id="KW-0268">Exocytosis</keyword>
<keyword id="KW-0597">Phosphoprotein</keyword>
<keyword id="KW-0653">Protein transport</keyword>
<keyword id="KW-1185">Reference proteome</keyword>
<keyword id="KW-0813">Transport</keyword>
<proteinExistence type="evidence at protein level"/>
<name>EXOC8_MOUSE</name>
<evidence type="ECO:0000250" key="1"/>
<evidence type="ECO:0000250" key="2">
    <source>
        <dbReference type="UniProtKB" id="O54924"/>
    </source>
</evidence>
<evidence type="ECO:0000250" key="3">
    <source>
        <dbReference type="UniProtKB" id="Q8IYI6"/>
    </source>
</evidence>
<evidence type="ECO:0000255" key="4">
    <source>
        <dbReference type="PROSITE-ProRule" id="PRU00145"/>
    </source>
</evidence>
<evidence type="ECO:0000256" key="5">
    <source>
        <dbReference type="SAM" id="MobiDB-lite"/>
    </source>
</evidence>
<evidence type="ECO:0000305" key="6"/>
<evidence type="ECO:0007744" key="7">
    <source>
    </source>
</evidence>
<organism>
    <name type="scientific">Mus musculus</name>
    <name type="common">Mouse</name>
    <dbReference type="NCBI Taxonomy" id="10090"/>
    <lineage>
        <taxon>Eukaryota</taxon>
        <taxon>Metazoa</taxon>
        <taxon>Chordata</taxon>
        <taxon>Craniata</taxon>
        <taxon>Vertebrata</taxon>
        <taxon>Euteleostomi</taxon>
        <taxon>Mammalia</taxon>
        <taxon>Eutheria</taxon>
        <taxon>Euarchontoglires</taxon>
        <taxon>Glires</taxon>
        <taxon>Rodentia</taxon>
        <taxon>Myomorpha</taxon>
        <taxon>Muroidea</taxon>
        <taxon>Muridae</taxon>
        <taxon>Murinae</taxon>
        <taxon>Mus</taxon>
        <taxon>Mus</taxon>
    </lineage>
</organism>